<reference key="1">
    <citation type="journal article" date="1994" name="Arch. Biochem. Biophys.">
        <title>Amino acid sequences of two high-potential iron sulfur proteins (HiPIPs) from the moderately halophilic purple phototrophic bacterium Ectothiorhodospira vacuolata.</title>
        <authorList>
            <person name="Ambler R.P."/>
            <person name="Meyer T.E."/>
            <person name="Kamen M.D."/>
        </authorList>
    </citation>
    <scope>PROTEIN SEQUENCE</scope>
    <source>
        <strain>ATCC 43036 / DSM 2111 / Beta-1 / BN 9512</strain>
    </source>
</reference>
<reference key="2">
    <citation type="journal article" date="1994" name="Biochemistry">
        <title>Molecular structure of the oxidized high-potential iron-sulfur protein isolated from Ectothiorhodospira vacuolata.</title>
        <authorList>
            <person name="Benning M.M."/>
            <person name="Meyer T.E."/>
            <person name="Rayment I."/>
            <person name="Holden H.M."/>
        </authorList>
    </citation>
    <scope>X-RAY CRYSTALLOGRAPHY (1.8 ANGSTROMS) IN COMPLEX WITH IRON-SULFUR (4FE-4S)</scope>
    <source>
        <strain>ATCC 43036 / DSM 2111 / Beta-1 / BN 9512</strain>
    </source>
</reference>
<gene>
    <name type="primary">hip2</name>
</gene>
<evidence type="ECO:0000255" key="1">
    <source>
        <dbReference type="PROSITE-ProRule" id="PRU00705"/>
    </source>
</evidence>
<evidence type="ECO:0000269" key="2">
    <source>
    </source>
</evidence>
<evidence type="ECO:0007829" key="3">
    <source>
        <dbReference type="PDB" id="1HPI"/>
    </source>
</evidence>
<name>HIP2_ECTSH</name>
<dbReference type="PIR" id="S41614">
    <property type="entry name" value="S41614"/>
</dbReference>
<dbReference type="PDB" id="1HPI">
    <property type="method" value="X-ray"/>
    <property type="resolution" value="1.80 A"/>
    <property type="chains" value="A=1-71"/>
</dbReference>
<dbReference type="PDBsum" id="1HPI"/>
<dbReference type="SMR" id="P38524"/>
<dbReference type="EvolutionaryTrace" id="P38524"/>
<dbReference type="GO" id="GO:0051539">
    <property type="term" value="F:4 iron, 4 sulfur cluster binding"/>
    <property type="evidence" value="ECO:0007669"/>
    <property type="project" value="UniProtKB-KW"/>
</dbReference>
<dbReference type="GO" id="GO:0009055">
    <property type="term" value="F:electron transfer activity"/>
    <property type="evidence" value="ECO:0007669"/>
    <property type="project" value="InterPro"/>
</dbReference>
<dbReference type="GO" id="GO:0046872">
    <property type="term" value="F:metal ion binding"/>
    <property type="evidence" value="ECO:0007669"/>
    <property type="project" value="UniProtKB-KW"/>
</dbReference>
<dbReference type="GO" id="GO:0019646">
    <property type="term" value="P:aerobic electron transport chain"/>
    <property type="evidence" value="ECO:0007669"/>
    <property type="project" value="InterPro"/>
</dbReference>
<dbReference type="Gene3D" id="4.10.490.10">
    <property type="entry name" value="High potential iron-sulphur protein"/>
    <property type="match status" value="1"/>
</dbReference>
<dbReference type="InterPro" id="IPR000170">
    <property type="entry name" value="High_potential_FeS_prot"/>
</dbReference>
<dbReference type="InterPro" id="IPR036369">
    <property type="entry name" value="HIPIP_sf"/>
</dbReference>
<dbReference type="Pfam" id="PF01355">
    <property type="entry name" value="HIPIP"/>
    <property type="match status" value="1"/>
</dbReference>
<dbReference type="SUPFAM" id="SSF57652">
    <property type="entry name" value="HIPIP (high potential iron protein)"/>
    <property type="match status" value="1"/>
</dbReference>
<dbReference type="PROSITE" id="PS51373">
    <property type="entry name" value="HIPIP"/>
    <property type="match status" value="1"/>
</dbReference>
<organism>
    <name type="scientific">Ectothiorhodospira shaposhnikovii</name>
    <name type="common">Ectothiorhodospira vacuolata</name>
    <dbReference type="NCBI Taxonomy" id="1054"/>
    <lineage>
        <taxon>Bacteria</taxon>
        <taxon>Pseudomonadati</taxon>
        <taxon>Pseudomonadota</taxon>
        <taxon>Gammaproteobacteria</taxon>
        <taxon>Chromatiales</taxon>
        <taxon>Ectothiorhodospiraceae</taxon>
        <taxon>Ectothiorhodospira</taxon>
    </lineage>
</organism>
<sequence>MERLSEDDPAAQALEYRHDASSVQHPAYEEGQTCLNCLLYTDASAQDWGPCSVFPGKLVSANGWCTAWVAR</sequence>
<protein>
    <recommendedName>
        <fullName>High-potential iron-sulfur protein isozyme 2</fullName>
        <shortName>HiPIP 2</shortName>
    </recommendedName>
</protein>
<feature type="chain" id="PRO_0000220421" description="High-potential iron-sulfur protein isozyme 2">
    <location>
        <begin position="1"/>
        <end position="71"/>
    </location>
</feature>
<feature type="binding site" evidence="2">
    <location>
        <position position="34"/>
    </location>
    <ligand>
        <name>[4Fe-4S] cluster</name>
        <dbReference type="ChEBI" id="CHEBI:49883"/>
    </ligand>
</feature>
<feature type="binding site" evidence="2">
    <location>
        <position position="37"/>
    </location>
    <ligand>
        <name>[4Fe-4S] cluster</name>
        <dbReference type="ChEBI" id="CHEBI:49883"/>
    </ligand>
</feature>
<feature type="binding site" evidence="2">
    <location>
        <position position="51"/>
    </location>
    <ligand>
        <name>[4Fe-4S] cluster</name>
        <dbReference type="ChEBI" id="CHEBI:49883"/>
    </ligand>
</feature>
<feature type="binding site" evidence="2">
    <location>
        <position position="65"/>
    </location>
    <ligand>
        <name>[4Fe-4S] cluster</name>
        <dbReference type="ChEBI" id="CHEBI:49883"/>
    </ligand>
</feature>
<feature type="helix" evidence="3">
    <location>
        <begin position="9"/>
        <end position="13"/>
    </location>
</feature>
<feature type="helix" evidence="3">
    <location>
        <begin position="20"/>
        <end position="22"/>
    </location>
</feature>
<feature type="helix" evidence="3">
    <location>
        <begin position="34"/>
        <end position="36"/>
    </location>
</feature>
<feature type="strand" evidence="3">
    <location>
        <begin position="46"/>
        <end position="51"/>
    </location>
</feature>
<feature type="strand" evidence="3">
    <location>
        <begin position="57"/>
        <end position="60"/>
    </location>
</feature>
<accession>P38524</accession>
<keyword id="KW-0002">3D-structure</keyword>
<keyword id="KW-0004">4Fe-4S</keyword>
<keyword id="KW-0903">Direct protein sequencing</keyword>
<keyword id="KW-0249">Electron transport</keyword>
<keyword id="KW-0408">Iron</keyword>
<keyword id="KW-0411">Iron-sulfur</keyword>
<keyword id="KW-0479">Metal-binding</keyword>
<keyword id="KW-0813">Transport</keyword>
<comment type="function">
    <text>Specific class of high-redox-potential 4Fe-4S ferredoxins. Functions in anaerobic electron transport in most purple and in some other photosynthetic bacteria and in at least one genus (Paracoccus) of halophilic, denitrifying bacteria.</text>
</comment>
<comment type="biophysicochemical properties">
    <redoxPotential>
        <text>E(0) is +150 mV.</text>
    </redoxPotential>
</comment>
<comment type="subunit">
    <text>Homodimer.</text>
</comment>
<comment type="similarity">
    <text evidence="1">Belongs to the high-potential iron-sulfur protein (HiPIP) family.</text>
</comment>
<proteinExistence type="evidence at protein level"/>